<accession>A0Q4K2</accession>
<sequence>MKLNTLAPAAGSKSAPKRLGRGIGSGLGKTSGKGHKGQKARSGGYHKVGFEGGQMPLQRRLPKFGFTSASKRYVAEIRLHELNNVVADEVTLDTLKDFGLIRKDIKTVKVIASGEIQKAVSLKGIACTKGAKEAIEKAGGKVE</sequence>
<organism>
    <name type="scientific">Francisella tularensis subsp. novicida (strain U112)</name>
    <dbReference type="NCBI Taxonomy" id="401614"/>
    <lineage>
        <taxon>Bacteria</taxon>
        <taxon>Pseudomonadati</taxon>
        <taxon>Pseudomonadota</taxon>
        <taxon>Gammaproteobacteria</taxon>
        <taxon>Thiotrichales</taxon>
        <taxon>Francisellaceae</taxon>
        <taxon>Francisella</taxon>
    </lineage>
</organism>
<reference key="1">
    <citation type="journal article" date="2007" name="Genome Biol.">
        <title>Comparison of Francisella tularensis genomes reveals evolutionary events associated with the emergence of human pathogenic strains.</title>
        <authorList>
            <person name="Rohmer L."/>
            <person name="Fong C."/>
            <person name="Abmayr S."/>
            <person name="Wasnick M."/>
            <person name="Larson Freeman T.J."/>
            <person name="Radey M."/>
            <person name="Guina T."/>
            <person name="Svensson K."/>
            <person name="Hayden H.S."/>
            <person name="Jacobs M."/>
            <person name="Gallagher L.A."/>
            <person name="Manoil C."/>
            <person name="Ernst R.K."/>
            <person name="Drees B."/>
            <person name="Buckley D."/>
            <person name="Haugen E."/>
            <person name="Bovee D."/>
            <person name="Zhou Y."/>
            <person name="Chang J."/>
            <person name="Levy R."/>
            <person name="Lim R."/>
            <person name="Gillett W."/>
            <person name="Guenthener D."/>
            <person name="Kang A."/>
            <person name="Shaffer S.A."/>
            <person name="Taylor G."/>
            <person name="Chen J."/>
            <person name="Gallis B."/>
            <person name="D'Argenio D.A."/>
            <person name="Forsman M."/>
            <person name="Olson M.V."/>
            <person name="Goodlett D.R."/>
            <person name="Kaul R."/>
            <person name="Miller S.I."/>
            <person name="Brittnacher M.J."/>
        </authorList>
    </citation>
    <scope>NUCLEOTIDE SEQUENCE [LARGE SCALE GENOMIC DNA]</scope>
    <source>
        <strain>U112</strain>
    </source>
</reference>
<feature type="chain" id="PRO_1000054463" description="Large ribosomal subunit protein uL15">
    <location>
        <begin position="1"/>
        <end position="143"/>
    </location>
</feature>
<feature type="region of interest" description="Disordered" evidence="2">
    <location>
        <begin position="1"/>
        <end position="52"/>
    </location>
</feature>
<feature type="compositionally biased region" description="Gly residues" evidence="2">
    <location>
        <begin position="21"/>
        <end position="31"/>
    </location>
</feature>
<name>RL15_FRATN</name>
<evidence type="ECO:0000255" key="1">
    <source>
        <dbReference type="HAMAP-Rule" id="MF_01341"/>
    </source>
</evidence>
<evidence type="ECO:0000256" key="2">
    <source>
        <dbReference type="SAM" id="MobiDB-lite"/>
    </source>
</evidence>
<evidence type="ECO:0000305" key="3"/>
<comment type="function">
    <text evidence="1">Binds to the 23S rRNA.</text>
</comment>
<comment type="subunit">
    <text evidence="1">Part of the 50S ribosomal subunit.</text>
</comment>
<comment type="similarity">
    <text evidence="1">Belongs to the universal ribosomal protein uL15 family.</text>
</comment>
<protein>
    <recommendedName>
        <fullName evidence="1">Large ribosomal subunit protein uL15</fullName>
    </recommendedName>
    <alternativeName>
        <fullName evidence="3">50S ribosomal protein L15</fullName>
    </alternativeName>
</protein>
<keyword id="KW-0687">Ribonucleoprotein</keyword>
<keyword id="KW-0689">Ribosomal protein</keyword>
<keyword id="KW-0694">RNA-binding</keyword>
<keyword id="KW-0699">rRNA-binding</keyword>
<gene>
    <name evidence="1" type="primary">rplO</name>
    <name type="ordered locus">FTN_0258</name>
</gene>
<dbReference type="EMBL" id="CP000439">
    <property type="protein sequence ID" value="ABK89167.1"/>
    <property type="molecule type" value="Genomic_DNA"/>
</dbReference>
<dbReference type="RefSeq" id="WP_003032892.1">
    <property type="nucleotide sequence ID" value="NZ_CP009633.1"/>
</dbReference>
<dbReference type="SMR" id="A0Q4K2"/>
<dbReference type="GeneID" id="75264242"/>
<dbReference type="KEGG" id="ftn:FTN_0258"/>
<dbReference type="KEGG" id="ftx:AW25_1784"/>
<dbReference type="BioCyc" id="FTUL401614:G1G75-269-MONOMER"/>
<dbReference type="Proteomes" id="UP000000762">
    <property type="component" value="Chromosome"/>
</dbReference>
<dbReference type="GO" id="GO:0022625">
    <property type="term" value="C:cytosolic large ribosomal subunit"/>
    <property type="evidence" value="ECO:0007669"/>
    <property type="project" value="TreeGrafter"/>
</dbReference>
<dbReference type="GO" id="GO:0019843">
    <property type="term" value="F:rRNA binding"/>
    <property type="evidence" value="ECO:0007669"/>
    <property type="project" value="UniProtKB-UniRule"/>
</dbReference>
<dbReference type="GO" id="GO:0003735">
    <property type="term" value="F:structural constituent of ribosome"/>
    <property type="evidence" value="ECO:0007669"/>
    <property type="project" value="InterPro"/>
</dbReference>
<dbReference type="GO" id="GO:0006412">
    <property type="term" value="P:translation"/>
    <property type="evidence" value="ECO:0007669"/>
    <property type="project" value="UniProtKB-UniRule"/>
</dbReference>
<dbReference type="Gene3D" id="3.100.10.10">
    <property type="match status" value="1"/>
</dbReference>
<dbReference type="HAMAP" id="MF_01341">
    <property type="entry name" value="Ribosomal_uL15"/>
    <property type="match status" value="1"/>
</dbReference>
<dbReference type="InterPro" id="IPR030878">
    <property type="entry name" value="Ribosomal_uL15"/>
</dbReference>
<dbReference type="InterPro" id="IPR021131">
    <property type="entry name" value="Ribosomal_uL15/eL18"/>
</dbReference>
<dbReference type="InterPro" id="IPR036227">
    <property type="entry name" value="Ribosomal_uL15/eL18_sf"/>
</dbReference>
<dbReference type="InterPro" id="IPR005749">
    <property type="entry name" value="Ribosomal_uL15_bac-type"/>
</dbReference>
<dbReference type="InterPro" id="IPR001196">
    <property type="entry name" value="Ribosomal_uL15_CS"/>
</dbReference>
<dbReference type="NCBIfam" id="TIGR01071">
    <property type="entry name" value="rplO_bact"/>
    <property type="match status" value="1"/>
</dbReference>
<dbReference type="PANTHER" id="PTHR12934">
    <property type="entry name" value="50S RIBOSOMAL PROTEIN L15"/>
    <property type="match status" value="1"/>
</dbReference>
<dbReference type="PANTHER" id="PTHR12934:SF11">
    <property type="entry name" value="LARGE RIBOSOMAL SUBUNIT PROTEIN UL15M"/>
    <property type="match status" value="1"/>
</dbReference>
<dbReference type="Pfam" id="PF00828">
    <property type="entry name" value="Ribosomal_L27A"/>
    <property type="match status" value="1"/>
</dbReference>
<dbReference type="SUPFAM" id="SSF52080">
    <property type="entry name" value="Ribosomal proteins L15p and L18e"/>
    <property type="match status" value="1"/>
</dbReference>
<dbReference type="PROSITE" id="PS00475">
    <property type="entry name" value="RIBOSOMAL_L15"/>
    <property type="match status" value="1"/>
</dbReference>
<proteinExistence type="inferred from homology"/>